<comment type="function">
    <text>Tubulin is the major constituent of microtubules, a cylinder consisting of laterally associated linear protofilaments composed of alpha- and beta-tubulin heterodimers. Microtubules grow by the addition of GTP-tubulin dimers to the microtubule end, where a stabilizing cap forms. Below the cap, tubulin dimers are in GDP-bound state, owing to GTPase activity of alpha-tubulin.</text>
</comment>
<comment type="cofactor">
    <cofactor evidence="1">
        <name>Mg(2+)</name>
        <dbReference type="ChEBI" id="CHEBI:18420"/>
    </cofactor>
</comment>
<comment type="subunit">
    <text>Dimer of alpha and beta chains. A typical microtubule is a hollow water-filled tube with an outer diameter of 25 nm and an inner diameter of 15 nM. Alpha-beta heterodimers associate head-to-tail to form protofilaments running lengthwise along the microtubule wall with the beta-tubulin subunit facing the microtubule plus end conferring a structural polarity. Microtubules usually have 13 protofilaments but different protofilament numbers can be found in some organisms and specialized cells.</text>
</comment>
<comment type="subcellular location">
    <subcellularLocation>
        <location>Cytoplasm</location>
        <location>Cytoskeleton</location>
    </subcellularLocation>
</comment>
<comment type="tissue specificity">
    <text evidence="4">Expressed in leaf sheaths and suspension cultured cells.</text>
</comment>
<comment type="induction">
    <text evidence="4">Down-regulated by abscisic acid (ABA).</text>
</comment>
<comment type="similarity">
    <text evidence="5">Belongs to the tubulin family.</text>
</comment>
<proteinExistence type="evidence at transcript level"/>
<keyword id="KW-0963">Cytoplasm</keyword>
<keyword id="KW-0206">Cytoskeleton</keyword>
<keyword id="KW-0342">GTP-binding</keyword>
<keyword id="KW-0460">Magnesium</keyword>
<keyword id="KW-0479">Metal-binding</keyword>
<keyword id="KW-0493">Microtubule</keyword>
<keyword id="KW-0547">Nucleotide-binding</keyword>
<keyword id="KW-1185">Reference proteome</keyword>
<accession>Q8H7U1</accession>
<accession>Q10T06</accession>
<organism>
    <name type="scientific">Oryza sativa subsp. japonica</name>
    <name type="common">Rice</name>
    <dbReference type="NCBI Taxonomy" id="39947"/>
    <lineage>
        <taxon>Eukaryota</taxon>
        <taxon>Viridiplantae</taxon>
        <taxon>Streptophyta</taxon>
        <taxon>Embryophyta</taxon>
        <taxon>Tracheophyta</taxon>
        <taxon>Spermatophyta</taxon>
        <taxon>Magnoliopsida</taxon>
        <taxon>Liliopsida</taxon>
        <taxon>Poales</taxon>
        <taxon>Poaceae</taxon>
        <taxon>BOP clade</taxon>
        <taxon>Oryzoideae</taxon>
        <taxon>Oryzeae</taxon>
        <taxon>Oryzinae</taxon>
        <taxon>Oryza</taxon>
        <taxon>Oryza sativa</taxon>
    </lineage>
</organism>
<reference key="1">
    <citation type="journal article" date="2005" name="Genome Res.">
        <title>Sequence, annotation, and analysis of synteny between rice chromosome 3 and diverged grass species.</title>
        <authorList>
            <consortium name="The rice chromosome 3 sequencing consortium"/>
            <person name="Buell C.R."/>
            <person name="Yuan Q."/>
            <person name="Ouyang S."/>
            <person name="Liu J."/>
            <person name="Zhu W."/>
            <person name="Wang A."/>
            <person name="Maiti R."/>
            <person name="Haas B."/>
            <person name="Wortman J."/>
            <person name="Pertea M."/>
            <person name="Jones K.M."/>
            <person name="Kim M."/>
            <person name="Overton L."/>
            <person name="Tsitrin T."/>
            <person name="Fadrosh D."/>
            <person name="Bera J."/>
            <person name="Weaver B."/>
            <person name="Jin S."/>
            <person name="Johri S."/>
            <person name="Reardon M."/>
            <person name="Webb K."/>
            <person name="Hill J."/>
            <person name="Moffat K."/>
            <person name="Tallon L."/>
            <person name="Van Aken S."/>
            <person name="Lewis M."/>
            <person name="Utterback T."/>
            <person name="Feldblyum T."/>
            <person name="Zismann V."/>
            <person name="Iobst S."/>
            <person name="Hsiao J."/>
            <person name="de Vazeille A.R."/>
            <person name="Salzberg S.L."/>
            <person name="White O."/>
            <person name="Fraser C.M."/>
            <person name="Yu Y."/>
            <person name="Kim H."/>
            <person name="Rambo T."/>
            <person name="Currie J."/>
            <person name="Collura K."/>
            <person name="Kernodle-Thompson S."/>
            <person name="Wei F."/>
            <person name="Kudrna K."/>
            <person name="Ammiraju J.S.S."/>
            <person name="Luo M."/>
            <person name="Goicoechea J.L."/>
            <person name="Wing R.A."/>
            <person name="Henry D."/>
            <person name="Oates R."/>
            <person name="Palmer M."/>
            <person name="Pries G."/>
            <person name="Saski C."/>
            <person name="Simmons J."/>
            <person name="Soderlund C."/>
            <person name="Nelson W."/>
            <person name="de la Bastide M."/>
            <person name="Spiegel L."/>
            <person name="Nascimento L."/>
            <person name="Huang E."/>
            <person name="Preston R."/>
            <person name="Zutavern T."/>
            <person name="Palmer L."/>
            <person name="O'Shaughnessy A."/>
            <person name="Dike S."/>
            <person name="McCombie W.R."/>
            <person name="Minx P."/>
            <person name="Cordum H."/>
            <person name="Wilson R."/>
            <person name="Jin W."/>
            <person name="Lee H.R."/>
            <person name="Jiang J."/>
            <person name="Jackson S."/>
        </authorList>
    </citation>
    <scope>NUCLEOTIDE SEQUENCE [LARGE SCALE GENOMIC DNA]</scope>
    <source>
        <strain>cv. Nipponbare</strain>
    </source>
</reference>
<reference key="2">
    <citation type="journal article" date="2005" name="Nature">
        <title>The map-based sequence of the rice genome.</title>
        <authorList>
            <consortium name="International rice genome sequencing project (IRGSP)"/>
        </authorList>
    </citation>
    <scope>NUCLEOTIDE SEQUENCE [LARGE SCALE GENOMIC DNA]</scope>
    <source>
        <strain>cv. Nipponbare</strain>
    </source>
</reference>
<reference key="3">
    <citation type="journal article" date="2013" name="Rice">
        <title>Improvement of the Oryza sativa Nipponbare reference genome using next generation sequence and optical map data.</title>
        <authorList>
            <person name="Kawahara Y."/>
            <person name="de la Bastide M."/>
            <person name="Hamilton J.P."/>
            <person name="Kanamori H."/>
            <person name="McCombie W.R."/>
            <person name="Ouyang S."/>
            <person name="Schwartz D.C."/>
            <person name="Tanaka T."/>
            <person name="Wu J."/>
            <person name="Zhou S."/>
            <person name="Childs K.L."/>
            <person name="Davidson R.M."/>
            <person name="Lin H."/>
            <person name="Quesada-Ocampo L."/>
            <person name="Vaillancourt B."/>
            <person name="Sakai H."/>
            <person name="Lee S.S."/>
            <person name="Kim J."/>
            <person name="Numa H."/>
            <person name="Itoh T."/>
            <person name="Buell C.R."/>
            <person name="Matsumoto T."/>
        </authorList>
    </citation>
    <scope>GENOME REANNOTATION</scope>
    <source>
        <strain>cv. Nipponbare</strain>
    </source>
</reference>
<reference key="4">
    <citation type="submission" date="2006-10" db="EMBL/GenBank/DDBJ databases">
        <title>Oryza sativa full length cDNA.</title>
        <authorList>
            <consortium name="The rice full-length cDNA consortium"/>
        </authorList>
    </citation>
    <scope>NUCLEOTIDE SEQUENCE [LARGE SCALE MRNA]</scope>
    <source>
        <strain>cv. Nipponbare</strain>
    </source>
</reference>
<reference key="5">
    <citation type="journal article" date="2003" name="Plant Cell Physiol.">
        <title>Expression analyses of beta-tubulin isotype genes in rice.</title>
        <authorList>
            <person name="Yoshikawa M."/>
            <person name="Yang G."/>
            <person name="Kawaguchi K."/>
            <person name="Komatsu S."/>
        </authorList>
    </citation>
    <scope>TISSUE SPECIFICITY</scope>
    <scope>INDUCTION</scope>
    <scope>NOMENCLATURE</scope>
</reference>
<evidence type="ECO:0000250" key="1">
    <source>
        <dbReference type="UniProtKB" id="P68363"/>
    </source>
</evidence>
<evidence type="ECO:0000250" key="2">
    <source>
        <dbReference type="UniProtKB" id="Q13509"/>
    </source>
</evidence>
<evidence type="ECO:0000256" key="3">
    <source>
        <dbReference type="SAM" id="MobiDB-lite"/>
    </source>
</evidence>
<evidence type="ECO:0000269" key="4">
    <source>
    </source>
</evidence>
<evidence type="ECO:0000305" key="5"/>
<protein>
    <recommendedName>
        <fullName>Tubulin beta-2 chain</fullName>
    </recommendedName>
    <alternativeName>
        <fullName>Beta-2-tubulin</fullName>
    </alternativeName>
</protein>
<name>TBB2_ORYSJ</name>
<dbReference type="EMBL" id="AC107224">
    <property type="protein sequence ID" value="AAN60482.1"/>
    <property type="molecule type" value="Genomic_DNA"/>
</dbReference>
<dbReference type="EMBL" id="DP000009">
    <property type="protein sequence ID" value="ABF93527.1"/>
    <property type="molecule type" value="Genomic_DNA"/>
</dbReference>
<dbReference type="EMBL" id="AP014959">
    <property type="protein sequence ID" value="BAS81862.1"/>
    <property type="molecule type" value="Genomic_DNA"/>
</dbReference>
<dbReference type="EMBL" id="AK243618">
    <property type="protein sequence ID" value="BAH01676.1"/>
    <property type="molecule type" value="mRNA"/>
</dbReference>
<dbReference type="RefSeq" id="XP_015631732.1">
    <property type="nucleotide sequence ID" value="XM_015776246.1"/>
</dbReference>
<dbReference type="SMR" id="Q8H7U1"/>
<dbReference type="FunCoup" id="Q8H7U1">
    <property type="interactions" value="2083"/>
</dbReference>
<dbReference type="STRING" id="39947.Q8H7U1"/>
<dbReference type="PaxDb" id="39947-Q8H7U1"/>
<dbReference type="EnsemblPlants" id="Os03t0105600-01">
    <property type="protein sequence ID" value="Os03t0105600-01"/>
    <property type="gene ID" value="Os03g0105600"/>
</dbReference>
<dbReference type="Gramene" id="Os03t0105600-01">
    <property type="protein sequence ID" value="Os03t0105600-01"/>
    <property type="gene ID" value="Os03g0105600"/>
</dbReference>
<dbReference type="eggNOG" id="KOG1375">
    <property type="taxonomic scope" value="Eukaryota"/>
</dbReference>
<dbReference type="HOGENOM" id="CLU_015718_1_1_1"/>
<dbReference type="InParanoid" id="Q8H7U1"/>
<dbReference type="OMA" id="CFPAGGN"/>
<dbReference type="OrthoDB" id="732292at2759"/>
<dbReference type="Proteomes" id="UP000000763">
    <property type="component" value="Chromosome 3"/>
</dbReference>
<dbReference type="Proteomes" id="UP000059680">
    <property type="component" value="Chromosome 3"/>
</dbReference>
<dbReference type="GO" id="GO:0005737">
    <property type="term" value="C:cytoplasm"/>
    <property type="evidence" value="ECO:0000318"/>
    <property type="project" value="GO_Central"/>
</dbReference>
<dbReference type="GO" id="GO:0005874">
    <property type="term" value="C:microtubule"/>
    <property type="evidence" value="ECO:0000318"/>
    <property type="project" value="GO_Central"/>
</dbReference>
<dbReference type="GO" id="GO:0005525">
    <property type="term" value="F:GTP binding"/>
    <property type="evidence" value="ECO:0000318"/>
    <property type="project" value="GO_Central"/>
</dbReference>
<dbReference type="GO" id="GO:0003924">
    <property type="term" value="F:GTPase activity"/>
    <property type="evidence" value="ECO:0007669"/>
    <property type="project" value="InterPro"/>
</dbReference>
<dbReference type="GO" id="GO:0046872">
    <property type="term" value="F:metal ion binding"/>
    <property type="evidence" value="ECO:0007669"/>
    <property type="project" value="UniProtKB-KW"/>
</dbReference>
<dbReference type="GO" id="GO:0005200">
    <property type="term" value="F:structural constituent of cytoskeleton"/>
    <property type="evidence" value="ECO:0000318"/>
    <property type="project" value="GO_Central"/>
</dbReference>
<dbReference type="GO" id="GO:0000226">
    <property type="term" value="P:microtubule cytoskeleton organization"/>
    <property type="evidence" value="ECO:0000318"/>
    <property type="project" value="GO_Central"/>
</dbReference>
<dbReference type="GO" id="GO:0000278">
    <property type="term" value="P:mitotic cell cycle"/>
    <property type="evidence" value="ECO:0000318"/>
    <property type="project" value="GO_Central"/>
</dbReference>
<dbReference type="CDD" id="cd02187">
    <property type="entry name" value="beta_tubulin"/>
    <property type="match status" value="1"/>
</dbReference>
<dbReference type="FunFam" id="1.10.287.600:FF:000006">
    <property type="entry name" value="Tubulin beta chain"/>
    <property type="match status" value="1"/>
</dbReference>
<dbReference type="FunFam" id="3.30.1330.20:FF:000002">
    <property type="entry name" value="Tubulin beta chain"/>
    <property type="match status" value="1"/>
</dbReference>
<dbReference type="FunFam" id="3.40.50.1440:FF:000005">
    <property type="entry name" value="Tubulin beta chain"/>
    <property type="match status" value="1"/>
</dbReference>
<dbReference type="Gene3D" id="1.10.287.600">
    <property type="entry name" value="Helix hairpin bin"/>
    <property type="match status" value="1"/>
</dbReference>
<dbReference type="Gene3D" id="3.30.1330.20">
    <property type="entry name" value="Tubulin/FtsZ, C-terminal domain"/>
    <property type="match status" value="1"/>
</dbReference>
<dbReference type="Gene3D" id="3.40.50.1440">
    <property type="entry name" value="Tubulin/FtsZ, GTPase domain"/>
    <property type="match status" value="1"/>
</dbReference>
<dbReference type="InterPro" id="IPR013838">
    <property type="entry name" value="Beta-tubulin_BS"/>
</dbReference>
<dbReference type="InterPro" id="IPR002453">
    <property type="entry name" value="Beta_tubulin"/>
</dbReference>
<dbReference type="InterPro" id="IPR008280">
    <property type="entry name" value="Tub_FtsZ_C"/>
</dbReference>
<dbReference type="InterPro" id="IPR000217">
    <property type="entry name" value="Tubulin"/>
</dbReference>
<dbReference type="InterPro" id="IPR037103">
    <property type="entry name" value="Tubulin/FtsZ-like_C"/>
</dbReference>
<dbReference type="InterPro" id="IPR018316">
    <property type="entry name" value="Tubulin/FtsZ_2-layer-sand-dom"/>
</dbReference>
<dbReference type="InterPro" id="IPR036525">
    <property type="entry name" value="Tubulin/FtsZ_GTPase_sf"/>
</dbReference>
<dbReference type="InterPro" id="IPR023123">
    <property type="entry name" value="Tubulin_C"/>
</dbReference>
<dbReference type="InterPro" id="IPR017975">
    <property type="entry name" value="Tubulin_CS"/>
</dbReference>
<dbReference type="InterPro" id="IPR003008">
    <property type="entry name" value="Tubulin_FtsZ_GTPase"/>
</dbReference>
<dbReference type="PANTHER" id="PTHR11588">
    <property type="entry name" value="TUBULIN"/>
    <property type="match status" value="1"/>
</dbReference>
<dbReference type="Pfam" id="PF00091">
    <property type="entry name" value="Tubulin"/>
    <property type="match status" value="1"/>
</dbReference>
<dbReference type="Pfam" id="PF03953">
    <property type="entry name" value="Tubulin_C"/>
    <property type="match status" value="1"/>
</dbReference>
<dbReference type="PRINTS" id="PR01163">
    <property type="entry name" value="BETATUBULIN"/>
</dbReference>
<dbReference type="PRINTS" id="PR01161">
    <property type="entry name" value="TUBULIN"/>
</dbReference>
<dbReference type="SMART" id="SM00864">
    <property type="entry name" value="Tubulin"/>
    <property type="match status" value="1"/>
</dbReference>
<dbReference type="SMART" id="SM00865">
    <property type="entry name" value="Tubulin_C"/>
    <property type="match status" value="1"/>
</dbReference>
<dbReference type="SUPFAM" id="SSF55307">
    <property type="entry name" value="Tubulin C-terminal domain-like"/>
    <property type="match status" value="1"/>
</dbReference>
<dbReference type="SUPFAM" id="SSF52490">
    <property type="entry name" value="Tubulin nucleotide-binding domain-like"/>
    <property type="match status" value="1"/>
</dbReference>
<dbReference type="PROSITE" id="PS00227">
    <property type="entry name" value="TUBULIN"/>
    <property type="match status" value="1"/>
</dbReference>
<dbReference type="PROSITE" id="PS00228">
    <property type="entry name" value="TUBULIN_B_AUTOREG"/>
    <property type="match status" value="1"/>
</dbReference>
<feature type="chain" id="PRO_0000048364" description="Tubulin beta-2 chain">
    <location>
        <begin position="1"/>
        <end position="447"/>
    </location>
</feature>
<feature type="region of interest" description="Disordered" evidence="3">
    <location>
        <begin position="419"/>
        <end position="447"/>
    </location>
</feature>
<feature type="compositionally biased region" description="Acidic residues" evidence="3">
    <location>
        <begin position="429"/>
        <end position="447"/>
    </location>
</feature>
<feature type="binding site" evidence="2">
    <location>
        <position position="11"/>
    </location>
    <ligand>
        <name>GTP</name>
        <dbReference type="ChEBI" id="CHEBI:37565"/>
    </ligand>
</feature>
<feature type="binding site" evidence="1">
    <location>
        <position position="69"/>
    </location>
    <ligand>
        <name>GTP</name>
        <dbReference type="ChEBI" id="CHEBI:37565"/>
    </ligand>
</feature>
<feature type="binding site" evidence="1">
    <location>
        <position position="69"/>
    </location>
    <ligand>
        <name>Mg(2+)</name>
        <dbReference type="ChEBI" id="CHEBI:18420"/>
    </ligand>
</feature>
<feature type="binding site" evidence="2">
    <location>
        <position position="138"/>
    </location>
    <ligand>
        <name>GTP</name>
        <dbReference type="ChEBI" id="CHEBI:37565"/>
    </ligand>
</feature>
<feature type="binding site" evidence="2">
    <location>
        <position position="142"/>
    </location>
    <ligand>
        <name>GTP</name>
        <dbReference type="ChEBI" id="CHEBI:37565"/>
    </ligand>
</feature>
<feature type="binding site" evidence="2">
    <location>
        <position position="143"/>
    </location>
    <ligand>
        <name>GTP</name>
        <dbReference type="ChEBI" id="CHEBI:37565"/>
    </ligand>
</feature>
<feature type="binding site" evidence="2">
    <location>
        <position position="144"/>
    </location>
    <ligand>
        <name>GTP</name>
        <dbReference type="ChEBI" id="CHEBI:37565"/>
    </ligand>
</feature>
<feature type="binding site" evidence="2">
    <location>
        <position position="204"/>
    </location>
    <ligand>
        <name>GTP</name>
        <dbReference type="ChEBI" id="CHEBI:37565"/>
    </ligand>
</feature>
<feature type="binding site" evidence="2">
    <location>
        <position position="226"/>
    </location>
    <ligand>
        <name>GTP</name>
        <dbReference type="ChEBI" id="CHEBI:37565"/>
    </ligand>
</feature>
<sequence>MREILHIQGGQCGNQIGAKFWEVVCAEHGIDATGRYDGDSDLQLERVNVYYNEASCGRFVPRAVLMDLEPGTMDSVRSGPYGHIFRPDNFVFGQSGAGNNWAKGHYTEGAELIDAVLDVVRKEAENCDCLQGFQVCHSLGGGTGSGMGTLLISKIREEYPDRMMLTFSVFPSPKVSDTVVEPYNATLSVHQLVENADECMVLDNEALYDICFRTLKLTTPSFGDLNHLISATMSGVTCCLRFPGQLNSDLRKLAVNLIPFPRLHFFMVGFAPLTSRGSQQYRALTVPELTQQMWDAKNMMCAADPRHGRYLTASAMFRGKMSTKEVDEQMLNVQNKNSSYFVEWIPNNVKSTVCDIPPTGLKMASTFIGNSTSIQEMFRRVSEQFTAMFRRKAFLHWYTGEGMDEMEFTEAESNMNDLVSEYQQYQDATADDEGEYEDEEEEADLQD</sequence>
<gene>
    <name type="primary">TUBB2</name>
    <name type="synonym">TUB2</name>
    <name type="ordered locus">Os03g0105600</name>
    <name type="ordered locus">LOC_Os03g01530</name>
    <name type="ORF">OSJNBa0009C08.10</name>
</gene>